<name>RRAA_ECO8A</name>
<accession>B7M6Y0</accession>
<gene>
    <name evidence="1" type="primary">rraA</name>
    <name type="ordered locus">ECIAI1_4134</name>
</gene>
<comment type="function">
    <text evidence="1">Globally modulates RNA abundance by binding to RNase E (Rne) and regulating its endonucleolytic activity. Can modulate Rne action in a substrate-dependent manner by altering the composition of the degradosome. Modulates RNA-binding and helicase activities of the degradosome.</text>
</comment>
<comment type="subunit">
    <text evidence="1">Homotrimer. Binds to both RNA-binding sites in the C-terminal region of Rne and to RhlB.</text>
</comment>
<comment type="subcellular location">
    <subcellularLocation>
        <location evidence="1">Cytoplasm</location>
    </subcellularLocation>
</comment>
<comment type="similarity">
    <text evidence="1">Belongs to the RraA family.</text>
</comment>
<dbReference type="EMBL" id="CU928160">
    <property type="protein sequence ID" value="CAR00905.1"/>
    <property type="molecule type" value="Genomic_DNA"/>
</dbReference>
<dbReference type="RefSeq" id="WP_000872908.1">
    <property type="nucleotide sequence ID" value="NC_011741.1"/>
</dbReference>
<dbReference type="SMR" id="B7M6Y0"/>
<dbReference type="GeneID" id="93777969"/>
<dbReference type="KEGG" id="ecr:ECIAI1_4134"/>
<dbReference type="HOGENOM" id="CLU_072626_4_0_6"/>
<dbReference type="GO" id="GO:0005829">
    <property type="term" value="C:cytosol"/>
    <property type="evidence" value="ECO:0007669"/>
    <property type="project" value="TreeGrafter"/>
</dbReference>
<dbReference type="GO" id="GO:0060698">
    <property type="term" value="F:endoribonuclease inhibitor activity"/>
    <property type="evidence" value="ECO:0007669"/>
    <property type="project" value="UniProtKB-UniRule"/>
</dbReference>
<dbReference type="GO" id="GO:0019899">
    <property type="term" value="F:enzyme binding"/>
    <property type="evidence" value="ECO:0007669"/>
    <property type="project" value="UniProtKB-UniRule"/>
</dbReference>
<dbReference type="GO" id="GO:1902369">
    <property type="term" value="P:negative regulation of RNA catabolic process"/>
    <property type="evidence" value="ECO:0007669"/>
    <property type="project" value="TreeGrafter"/>
</dbReference>
<dbReference type="CDD" id="cd16841">
    <property type="entry name" value="RraA_family"/>
    <property type="match status" value="1"/>
</dbReference>
<dbReference type="FunFam" id="3.50.30.40:FF:000001">
    <property type="entry name" value="Regulator of ribonuclease activity A"/>
    <property type="match status" value="1"/>
</dbReference>
<dbReference type="Gene3D" id="3.50.30.40">
    <property type="entry name" value="Ribonuclease E inhibitor RraA/RraA-like"/>
    <property type="match status" value="1"/>
</dbReference>
<dbReference type="HAMAP" id="MF_00471">
    <property type="entry name" value="RraA"/>
    <property type="match status" value="1"/>
</dbReference>
<dbReference type="InterPro" id="IPR010203">
    <property type="entry name" value="RraA"/>
</dbReference>
<dbReference type="InterPro" id="IPR005493">
    <property type="entry name" value="RraA/RraA-like"/>
</dbReference>
<dbReference type="InterPro" id="IPR036704">
    <property type="entry name" value="RraA/RraA-like_sf"/>
</dbReference>
<dbReference type="InterPro" id="IPR014339">
    <property type="entry name" value="RraA_gpbac"/>
</dbReference>
<dbReference type="NCBIfam" id="TIGR01935">
    <property type="entry name" value="NOT-MenG"/>
    <property type="match status" value="1"/>
</dbReference>
<dbReference type="NCBIfam" id="NF006875">
    <property type="entry name" value="PRK09372.1"/>
    <property type="match status" value="1"/>
</dbReference>
<dbReference type="NCBIfam" id="TIGR02998">
    <property type="entry name" value="RraA_entero"/>
    <property type="match status" value="1"/>
</dbReference>
<dbReference type="PANTHER" id="PTHR33254">
    <property type="entry name" value="4-HYDROXY-4-METHYL-2-OXOGLUTARATE ALDOLASE 3-RELATED"/>
    <property type="match status" value="1"/>
</dbReference>
<dbReference type="PANTHER" id="PTHR33254:SF29">
    <property type="entry name" value="REGULATOR OF RIBONUCLEASE ACTIVITY A"/>
    <property type="match status" value="1"/>
</dbReference>
<dbReference type="Pfam" id="PF03737">
    <property type="entry name" value="RraA-like"/>
    <property type="match status" value="1"/>
</dbReference>
<dbReference type="SUPFAM" id="SSF89562">
    <property type="entry name" value="RraA-like"/>
    <property type="match status" value="1"/>
</dbReference>
<sequence length="161" mass="17360">MKYDTSELCDIYQEDVNVVEPLFSNFGGRASFGGQIITVKCFEDNGLLYDLLEQNGRGRVLVVDGGGSVRRALVDAELARLAVQNEWEGLVIYGAVRQVDDLEELDIGIQAMAAIPVGAAGEGIGESDVRVNFGGVTFFSGDHLYADNTGIILSEDPLDIE</sequence>
<protein>
    <recommendedName>
        <fullName evidence="1">Regulator of ribonuclease activity A</fullName>
    </recommendedName>
</protein>
<keyword id="KW-0963">Cytoplasm</keyword>
<feature type="chain" id="PRO_1000194861" description="Regulator of ribonuclease activity A">
    <location>
        <begin position="1"/>
        <end position="161"/>
    </location>
</feature>
<proteinExistence type="inferred from homology"/>
<organism>
    <name type="scientific">Escherichia coli O8 (strain IAI1)</name>
    <dbReference type="NCBI Taxonomy" id="585034"/>
    <lineage>
        <taxon>Bacteria</taxon>
        <taxon>Pseudomonadati</taxon>
        <taxon>Pseudomonadota</taxon>
        <taxon>Gammaproteobacteria</taxon>
        <taxon>Enterobacterales</taxon>
        <taxon>Enterobacteriaceae</taxon>
        <taxon>Escherichia</taxon>
    </lineage>
</organism>
<reference key="1">
    <citation type="journal article" date="2009" name="PLoS Genet.">
        <title>Organised genome dynamics in the Escherichia coli species results in highly diverse adaptive paths.</title>
        <authorList>
            <person name="Touchon M."/>
            <person name="Hoede C."/>
            <person name="Tenaillon O."/>
            <person name="Barbe V."/>
            <person name="Baeriswyl S."/>
            <person name="Bidet P."/>
            <person name="Bingen E."/>
            <person name="Bonacorsi S."/>
            <person name="Bouchier C."/>
            <person name="Bouvet O."/>
            <person name="Calteau A."/>
            <person name="Chiapello H."/>
            <person name="Clermont O."/>
            <person name="Cruveiller S."/>
            <person name="Danchin A."/>
            <person name="Diard M."/>
            <person name="Dossat C."/>
            <person name="Karoui M.E."/>
            <person name="Frapy E."/>
            <person name="Garry L."/>
            <person name="Ghigo J.M."/>
            <person name="Gilles A.M."/>
            <person name="Johnson J."/>
            <person name="Le Bouguenec C."/>
            <person name="Lescat M."/>
            <person name="Mangenot S."/>
            <person name="Martinez-Jehanne V."/>
            <person name="Matic I."/>
            <person name="Nassif X."/>
            <person name="Oztas S."/>
            <person name="Petit M.A."/>
            <person name="Pichon C."/>
            <person name="Rouy Z."/>
            <person name="Ruf C.S."/>
            <person name="Schneider D."/>
            <person name="Tourret J."/>
            <person name="Vacherie B."/>
            <person name="Vallenet D."/>
            <person name="Medigue C."/>
            <person name="Rocha E.P.C."/>
            <person name="Denamur E."/>
        </authorList>
    </citation>
    <scope>NUCLEOTIDE SEQUENCE [LARGE SCALE GENOMIC DNA]</scope>
    <source>
        <strain>IAI1</strain>
    </source>
</reference>
<evidence type="ECO:0000255" key="1">
    <source>
        <dbReference type="HAMAP-Rule" id="MF_00471"/>
    </source>
</evidence>